<protein>
    <recommendedName>
        <fullName evidence="1">Ribosome-binding factor A</fullName>
    </recommendedName>
</protein>
<dbReference type="EMBL" id="CP000010">
    <property type="protein sequence ID" value="AAU48842.1"/>
    <property type="molecule type" value="Genomic_DNA"/>
</dbReference>
<dbReference type="RefSeq" id="WP_004199441.1">
    <property type="nucleotide sequence ID" value="NC_006348.1"/>
</dbReference>
<dbReference type="RefSeq" id="YP_102759.1">
    <property type="nucleotide sequence ID" value="NC_006348.1"/>
</dbReference>
<dbReference type="SMR" id="Q62KL0"/>
<dbReference type="GeneID" id="93060074"/>
<dbReference type="KEGG" id="bma:BMA1060"/>
<dbReference type="PATRIC" id="fig|243160.12.peg.1096"/>
<dbReference type="eggNOG" id="COG0858">
    <property type="taxonomic scope" value="Bacteria"/>
</dbReference>
<dbReference type="HOGENOM" id="CLU_089475_5_1_4"/>
<dbReference type="Proteomes" id="UP000006693">
    <property type="component" value="Chromosome 1"/>
</dbReference>
<dbReference type="GO" id="GO:0005829">
    <property type="term" value="C:cytosol"/>
    <property type="evidence" value="ECO:0007669"/>
    <property type="project" value="TreeGrafter"/>
</dbReference>
<dbReference type="GO" id="GO:0043024">
    <property type="term" value="F:ribosomal small subunit binding"/>
    <property type="evidence" value="ECO:0007669"/>
    <property type="project" value="TreeGrafter"/>
</dbReference>
<dbReference type="GO" id="GO:0030490">
    <property type="term" value="P:maturation of SSU-rRNA"/>
    <property type="evidence" value="ECO:0007669"/>
    <property type="project" value="UniProtKB-UniRule"/>
</dbReference>
<dbReference type="Gene3D" id="3.30.300.20">
    <property type="match status" value="1"/>
</dbReference>
<dbReference type="HAMAP" id="MF_00003">
    <property type="entry name" value="RbfA"/>
    <property type="match status" value="1"/>
</dbReference>
<dbReference type="InterPro" id="IPR015946">
    <property type="entry name" value="KH_dom-like_a/b"/>
</dbReference>
<dbReference type="InterPro" id="IPR000238">
    <property type="entry name" value="RbfA"/>
</dbReference>
<dbReference type="InterPro" id="IPR023799">
    <property type="entry name" value="RbfA_dom_sf"/>
</dbReference>
<dbReference type="NCBIfam" id="TIGR00082">
    <property type="entry name" value="rbfA"/>
    <property type="match status" value="1"/>
</dbReference>
<dbReference type="PANTHER" id="PTHR33515">
    <property type="entry name" value="RIBOSOME-BINDING FACTOR A, CHLOROPLASTIC-RELATED"/>
    <property type="match status" value="1"/>
</dbReference>
<dbReference type="PANTHER" id="PTHR33515:SF1">
    <property type="entry name" value="RIBOSOME-BINDING FACTOR A, CHLOROPLASTIC-RELATED"/>
    <property type="match status" value="1"/>
</dbReference>
<dbReference type="Pfam" id="PF02033">
    <property type="entry name" value="RBFA"/>
    <property type="match status" value="1"/>
</dbReference>
<dbReference type="SUPFAM" id="SSF89919">
    <property type="entry name" value="Ribosome-binding factor A, RbfA"/>
    <property type="match status" value="1"/>
</dbReference>
<comment type="function">
    <text evidence="1">One of several proteins that assist in the late maturation steps of the functional core of the 30S ribosomal subunit. Associates with free 30S ribosomal subunits (but not with 30S subunits that are part of 70S ribosomes or polysomes). Required for efficient processing of 16S rRNA. May interact with the 5'-terminal helix region of 16S rRNA.</text>
</comment>
<comment type="subunit">
    <text evidence="1">Monomer. Binds 30S ribosomal subunits, but not 50S ribosomal subunits or 70S ribosomes.</text>
</comment>
<comment type="subcellular location">
    <subcellularLocation>
        <location evidence="1">Cytoplasm</location>
    </subcellularLocation>
</comment>
<comment type="similarity">
    <text evidence="1">Belongs to the RbfA family.</text>
</comment>
<name>RBFA_BURMA</name>
<accession>Q62KL0</accession>
<proteinExistence type="inferred from homology"/>
<keyword id="KW-0963">Cytoplasm</keyword>
<keyword id="KW-1185">Reference proteome</keyword>
<keyword id="KW-0690">Ribosome biogenesis</keyword>
<sequence length="122" mass="13808">MSKKRSSPNRNVQIADQIQRDLSELIMREVKDPRIGIVTIQSVELTPDYAHAKVYFTALTGTPADTQEALNHAAGHLHNLLFKRLHIHTVPTLHFHYDQTIEKAVAMSRLIDEANATRAKDD</sequence>
<organism>
    <name type="scientific">Burkholderia mallei (strain ATCC 23344)</name>
    <dbReference type="NCBI Taxonomy" id="243160"/>
    <lineage>
        <taxon>Bacteria</taxon>
        <taxon>Pseudomonadati</taxon>
        <taxon>Pseudomonadota</taxon>
        <taxon>Betaproteobacteria</taxon>
        <taxon>Burkholderiales</taxon>
        <taxon>Burkholderiaceae</taxon>
        <taxon>Burkholderia</taxon>
        <taxon>pseudomallei group</taxon>
    </lineage>
</organism>
<gene>
    <name evidence="1" type="primary">rbfA</name>
    <name type="ordered locus">BMA1060</name>
</gene>
<reference key="1">
    <citation type="journal article" date="2004" name="Proc. Natl. Acad. Sci. U.S.A.">
        <title>Structural flexibility in the Burkholderia mallei genome.</title>
        <authorList>
            <person name="Nierman W.C."/>
            <person name="DeShazer D."/>
            <person name="Kim H.S."/>
            <person name="Tettelin H."/>
            <person name="Nelson K.E."/>
            <person name="Feldblyum T.V."/>
            <person name="Ulrich R.L."/>
            <person name="Ronning C.M."/>
            <person name="Brinkac L.M."/>
            <person name="Daugherty S.C."/>
            <person name="Davidsen T.D."/>
            <person name="DeBoy R.T."/>
            <person name="Dimitrov G."/>
            <person name="Dodson R.J."/>
            <person name="Durkin A.S."/>
            <person name="Gwinn M.L."/>
            <person name="Haft D.H."/>
            <person name="Khouri H.M."/>
            <person name="Kolonay J.F."/>
            <person name="Madupu R."/>
            <person name="Mohammoud Y."/>
            <person name="Nelson W.C."/>
            <person name="Radune D."/>
            <person name="Romero C.M."/>
            <person name="Sarria S."/>
            <person name="Selengut J."/>
            <person name="Shamblin C."/>
            <person name="Sullivan S.A."/>
            <person name="White O."/>
            <person name="Yu Y."/>
            <person name="Zafar N."/>
            <person name="Zhou L."/>
            <person name="Fraser C.M."/>
        </authorList>
    </citation>
    <scope>NUCLEOTIDE SEQUENCE [LARGE SCALE GENOMIC DNA]</scope>
    <source>
        <strain>ATCC 23344</strain>
    </source>
</reference>
<evidence type="ECO:0000255" key="1">
    <source>
        <dbReference type="HAMAP-Rule" id="MF_00003"/>
    </source>
</evidence>
<feature type="chain" id="PRO_0000102637" description="Ribosome-binding factor A">
    <location>
        <begin position="1"/>
        <end position="122"/>
    </location>
</feature>